<protein>
    <recommendedName>
        <fullName evidence="8">Snake venom metalloproteinase fibrolase</fullName>
        <shortName>SVMP</shortName>
        <ecNumber>3.4.24.72</ecNumber>
    </recommendedName>
    <alternativeName>
        <fullName evidence="8">Fibrinolytic metalloproteinase</fullName>
        <shortName>Fibrinolytic proteinase</shortName>
    </alternativeName>
    <innName evidence="7 9">Alfimeprase</innName>
</protein>
<dbReference type="EC" id="3.4.24.72"/>
<dbReference type="SMR" id="P28891"/>
<dbReference type="MEROPS" id="M12.133"/>
<dbReference type="BRENDA" id="3.4.24.72">
    <property type="organism ID" value="192"/>
</dbReference>
<dbReference type="GO" id="GO:0005576">
    <property type="term" value="C:extracellular region"/>
    <property type="evidence" value="ECO:0007669"/>
    <property type="project" value="UniProtKB-SubCell"/>
</dbReference>
<dbReference type="GO" id="GO:0005886">
    <property type="term" value="C:plasma membrane"/>
    <property type="evidence" value="ECO:0007669"/>
    <property type="project" value="TreeGrafter"/>
</dbReference>
<dbReference type="GO" id="GO:0046872">
    <property type="term" value="F:metal ion binding"/>
    <property type="evidence" value="ECO:0007669"/>
    <property type="project" value="UniProtKB-KW"/>
</dbReference>
<dbReference type="GO" id="GO:0004222">
    <property type="term" value="F:metalloendopeptidase activity"/>
    <property type="evidence" value="ECO:0007669"/>
    <property type="project" value="UniProtKB-EC"/>
</dbReference>
<dbReference type="GO" id="GO:0090729">
    <property type="term" value="F:toxin activity"/>
    <property type="evidence" value="ECO:0007669"/>
    <property type="project" value="UniProtKB-KW"/>
</dbReference>
<dbReference type="GO" id="GO:0006508">
    <property type="term" value="P:proteolysis"/>
    <property type="evidence" value="ECO:0007669"/>
    <property type="project" value="UniProtKB-KW"/>
</dbReference>
<dbReference type="CDD" id="cd04269">
    <property type="entry name" value="ZnMc_adamalysin_II_like"/>
    <property type="match status" value="1"/>
</dbReference>
<dbReference type="FunFam" id="3.40.390.10:FF:000002">
    <property type="entry name" value="Disintegrin and metalloproteinase domain-containing protein 22"/>
    <property type="match status" value="1"/>
</dbReference>
<dbReference type="Gene3D" id="3.40.390.10">
    <property type="entry name" value="Collagenase (Catalytic Domain)"/>
    <property type="match status" value="1"/>
</dbReference>
<dbReference type="InterPro" id="IPR024079">
    <property type="entry name" value="MetalloPept_cat_dom_sf"/>
</dbReference>
<dbReference type="InterPro" id="IPR001590">
    <property type="entry name" value="Peptidase_M12B"/>
</dbReference>
<dbReference type="InterPro" id="IPR034027">
    <property type="entry name" value="Reprolysin_adamalysin"/>
</dbReference>
<dbReference type="PANTHER" id="PTHR11905">
    <property type="entry name" value="ADAM A DISINTEGRIN AND METALLOPROTEASE DOMAIN"/>
    <property type="match status" value="1"/>
</dbReference>
<dbReference type="PANTHER" id="PTHR11905:SF32">
    <property type="entry name" value="DISINTEGRIN AND METALLOPROTEINASE DOMAIN-CONTAINING PROTEIN 28"/>
    <property type="match status" value="1"/>
</dbReference>
<dbReference type="Pfam" id="PF01421">
    <property type="entry name" value="Reprolysin"/>
    <property type="match status" value="1"/>
</dbReference>
<dbReference type="SUPFAM" id="SSF55486">
    <property type="entry name" value="Metalloproteases ('zincins'), catalytic domain"/>
    <property type="match status" value="1"/>
</dbReference>
<dbReference type="PROSITE" id="PS50215">
    <property type="entry name" value="ADAM_MEPRO"/>
    <property type="match status" value="1"/>
</dbReference>
<dbReference type="PROSITE" id="PS00142">
    <property type="entry name" value="ZINC_PROTEASE"/>
    <property type="match status" value="1"/>
</dbReference>
<evidence type="ECO:0000250" key="1"/>
<evidence type="ECO:0000255" key="2">
    <source>
        <dbReference type="PROSITE-ProRule" id="PRU00276"/>
    </source>
</evidence>
<evidence type="ECO:0000255" key="3">
    <source>
        <dbReference type="PROSITE-ProRule" id="PRU10095"/>
    </source>
</evidence>
<evidence type="ECO:0000269" key="4">
    <source>
    </source>
</evidence>
<evidence type="ECO:0000269" key="5">
    <source>
    </source>
</evidence>
<evidence type="ECO:0000269" key="6">
    <source>
    </source>
</evidence>
<evidence type="ECO:0000303" key="7">
    <source>
    </source>
</evidence>
<evidence type="ECO:0000303" key="8">
    <source>
    </source>
</evidence>
<evidence type="ECO:0000303" key="9">
    <source>
    </source>
</evidence>
<evidence type="ECO:0000305" key="10"/>
<evidence type="ECO:0000305" key="11">
    <source>
    </source>
</evidence>
<evidence type="ECO:0000305" key="12">
    <source>
    </source>
</evidence>
<name>VM1F_AGKCO</name>
<comment type="function">
    <text>Snake venom zinc metalloprotease that exhibits direct fibrinolytic activity.</text>
</comment>
<comment type="catalytic activity">
    <reaction>
        <text>Hydrolysis of 14-Ala-|-Leu-15 in insulin B chain and 413-Lys-|-Leu-414 in alpha-chain of fibrinogen.</text>
        <dbReference type="EC" id="3.4.24.72"/>
    </reaction>
</comment>
<comment type="cofactor">
    <cofactor evidence="1">
        <name>Zn(2+)</name>
        <dbReference type="ChEBI" id="CHEBI:29105"/>
    </cofactor>
    <text evidence="1">Binds 1 zinc ion.</text>
</comment>
<comment type="activity regulation">
    <text evidence="6">Is inhibited by EDTA, o-phenanthroline and tetraethylenepentamine.</text>
</comment>
<comment type="subunit">
    <text evidence="1">Monomer.</text>
</comment>
<comment type="subcellular location">
    <subcellularLocation>
        <location evidence="5 6">Secreted</location>
    </subcellularLocation>
</comment>
<comment type="tissue specificity">
    <text evidence="11 12">Expressed by the venom gland.</text>
</comment>
<comment type="pharmaceutical">
    <text>Failed the phase III clinical trial for the treatment of arterial occlusive disease and acute ischemic stroke.</text>
</comment>
<comment type="similarity">
    <text evidence="10">Belongs to the venom metalloproteinase (M12B) family. P-I subfamily.</text>
</comment>
<feature type="chain" id="PRO_0000078197" description="Snake venom metalloproteinase fibrolase" evidence="5">
    <location>
        <begin position="1"/>
        <end position="203"/>
    </location>
</feature>
<feature type="domain" description="Peptidase M12B" evidence="2">
    <location>
        <begin position="7"/>
        <end position="203"/>
    </location>
</feature>
<feature type="active site" evidence="2 3">
    <location>
        <position position="144"/>
    </location>
</feature>
<feature type="binding site" evidence="10">
    <location>
        <position position="143"/>
    </location>
    <ligand>
        <name>Zn(2+)</name>
        <dbReference type="ChEBI" id="CHEBI:29105"/>
        <note>catalytic</note>
    </ligand>
</feature>
<feature type="binding site" evidence="10">
    <location>
        <position position="147"/>
    </location>
    <ligand>
        <name>Zn(2+)</name>
        <dbReference type="ChEBI" id="CHEBI:29105"/>
        <note>catalytic</note>
    </ligand>
</feature>
<feature type="binding site" evidence="10">
    <location>
        <position position="153"/>
    </location>
    <ligand>
        <name>Zn(2+)</name>
        <dbReference type="ChEBI" id="CHEBI:29105"/>
        <note>catalytic</note>
    </ligand>
</feature>
<feature type="modified residue" description="Pyrrolidone carboxylic acid" evidence="5">
    <location>
        <position position="1"/>
    </location>
</feature>
<feature type="disulfide bond" evidence="4 5">
    <location>
        <begin position="118"/>
        <end position="198"/>
    </location>
</feature>
<feature type="disulfide bond" evidence="4">
    <location>
        <begin position="158"/>
        <end position="182"/>
    </location>
</feature>
<feature type="disulfide bond" evidence="4">
    <location>
        <begin position="160"/>
        <end position="165"/>
    </location>
</feature>
<feature type="sequence variant" evidence="5">
    <location>
        <position position="2"/>
    </location>
</feature>
<feature type="sequence variant" evidence="5">
    <original>T</original>
    <variation>E</variation>
    <location>
        <position position="189"/>
    </location>
</feature>
<feature type="sequence variant" evidence="5">
    <original>T</original>
    <variation>L</variation>
    <location>
        <position position="192"/>
    </location>
</feature>
<reference key="1">
    <citation type="journal article" date="1992" name="Protein Sci.">
        <title>Amino acid sequence of fibrolase, a direct-acting fibrinolytic enzyme from Agkistrodon contortrix contortrix venom.</title>
        <authorList>
            <person name="Randolph A."/>
            <person name="Chamberlain S.H."/>
            <person name="Chu H.L.C."/>
            <person name="Retzios A.D."/>
            <person name="Markland F.S. Jr."/>
            <person name="Masiarz F.R."/>
        </authorList>
    </citation>
    <scope>PROTEIN SEQUENCE</scope>
    <scope>PYROGLUTAMATE FORMATION AT GLN-1</scope>
    <scope>DISULFIDE BOND (PARTIAL)</scope>
    <scope>VARIANTS GLN-2 DEL; GLU-189 AND LEU-192</scope>
    <scope>SUBCELLULAR LOCATION</scope>
    <source>
        <tissue>Venom</tissue>
    </source>
</reference>
<reference key="2">
    <citation type="journal article" date="1991" name="Arch. Biochem. Biophys.">
        <title>Purification and characterization of a fibrinolytic enzyme from venom of the southern copperhead snake (Agkistrodon contortrix contortrix).</title>
        <authorList>
            <person name="Guan A.L."/>
            <person name="Retzios A.D."/>
            <person name="Henderson G.N."/>
            <person name="Markland F.S. Jr."/>
        </authorList>
    </citation>
    <scope>PROTEIN SEQUENCE OF 141-151</scope>
    <scope>ACTIVITY REGULATION</scope>
    <scope>SUBCELLULAR LOCATION</scope>
    <source>
        <tissue>Venom</tissue>
    </source>
</reference>
<reference key="3">
    <citation type="journal article" date="2001" name="Protein Sci.">
        <title>Disulfide structure of alfimeprase: a recombinant analog of fibrolase.</title>
        <authorList>
            <person name="Jones G."/>
            <person name="Ronk M."/>
            <person name="Mori F."/>
            <person name="Zhang Z."/>
        </authorList>
    </citation>
    <scope>DISULFIDE BONDS</scope>
</reference>
<reference key="4">
    <citation type="journal article" date="2006" name="Support. Cancer Ther.">
        <title>Clinical utility of novel agents in the treatment of central venous catheter occlusion.</title>
        <authorList>
            <person name="Reddy G.K."/>
        </authorList>
    </citation>
    <scope>PHARMACEUTICAL</scope>
</reference>
<sequence>QQRFPQRYVQLVIVADHRMNTKYNGDSDKIRQWVHQIVNTINEIYRPLNIQFTLVGLEIWSNQDLITVTSVSHDTLASFGNWRETDLLRRQRHDNAQLLTAIDFDGDTVGLAYVGGMCQLKHSTGVIQDHSAINLLVALTMAHELGHNLGMNHDGNQCHCGANSCVMAAMLSDQPSKLFSDCSKKDYQTFLTVNNPQCILNKP</sequence>
<keyword id="KW-0903">Direct protein sequencing</keyword>
<keyword id="KW-1015">Disulfide bond</keyword>
<keyword id="KW-1205">Fibrinolytic toxin</keyword>
<keyword id="KW-1199">Hemostasis impairing toxin</keyword>
<keyword id="KW-0378">Hydrolase</keyword>
<keyword id="KW-0479">Metal-binding</keyword>
<keyword id="KW-0482">Metalloprotease</keyword>
<keyword id="KW-0582">Pharmaceutical</keyword>
<keyword id="KW-0645">Protease</keyword>
<keyword id="KW-0873">Pyrrolidone carboxylic acid</keyword>
<keyword id="KW-0964">Secreted</keyword>
<keyword id="KW-0800">Toxin</keyword>
<keyword id="KW-0862">Zinc</keyword>
<accession>P28891</accession>
<accession>Q9PS71</accession>
<organism>
    <name type="scientific">Agkistrodon contortrix contortrix</name>
    <name type="common">Southern copperhead</name>
    <dbReference type="NCBI Taxonomy" id="8713"/>
    <lineage>
        <taxon>Eukaryota</taxon>
        <taxon>Metazoa</taxon>
        <taxon>Chordata</taxon>
        <taxon>Craniata</taxon>
        <taxon>Vertebrata</taxon>
        <taxon>Euteleostomi</taxon>
        <taxon>Lepidosauria</taxon>
        <taxon>Squamata</taxon>
        <taxon>Bifurcata</taxon>
        <taxon>Unidentata</taxon>
        <taxon>Episquamata</taxon>
        <taxon>Toxicofera</taxon>
        <taxon>Serpentes</taxon>
        <taxon>Colubroidea</taxon>
        <taxon>Viperidae</taxon>
        <taxon>Crotalinae</taxon>
        <taxon>Agkistrodon</taxon>
    </lineage>
</organism>
<proteinExistence type="evidence at protein level"/>